<gene>
    <name type="primary">Faf2</name>
    <name type="synonym">Ubxd8</name>
</gene>
<feature type="chain" id="PRO_0000244066" description="FAS-associated factor 2">
    <location>
        <begin position="1"/>
        <end position="346"/>
    </location>
</feature>
<feature type="domain" description="UBX" evidence="4">
    <location>
        <begin position="258"/>
        <end position="340"/>
    </location>
</feature>
<feature type="region of interest" description="Disordered" evidence="5">
    <location>
        <begin position="200"/>
        <end position="262"/>
    </location>
</feature>
<feature type="coiled-coil region" evidence="3">
    <location>
        <begin position="176"/>
        <end position="251"/>
    </location>
</feature>
<feature type="compositionally biased region" description="Basic and acidic residues" evidence="5">
    <location>
        <begin position="204"/>
        <end position="249"/>
    </location>
</feature>
<feature type="modified residue" description="N6-acetyllysine" evidence="2">
    <location>
        <position position="68"/>
    </location>
</feature>
<dbReference type="EMBL" id="BC091224">
    <property type="protein sequence ID" value="AAH91224.1"/>
    <property type="molecule type" value="mRNA"/>
</dbReference>
<dbReference type="RefSeq" id="NP_001017445.1">
    <property type="nucleotide sequence ID" value="NM_001017445.2"/>
</dbReference>
<dbReference type="SMR" id="Q5BK32"/>
<dbReference type="FunCoup" id="Q5BK32">
    <property type="interactions" value="4894"/>
</dbReference>
<dbReference type="STRING" id="10116.ENSRNOP00000068627"/>
<dbReference type="iPTMnet" id="Q5BK32"/>
<dbReference type="PhosphoSitePlus" id="Q5BK32"/>
<dbReference type="jPOST" id="Q5BK32"/>
<dbReference type="PaxDb" id="10116-ENSRNOP00000063246"/>
<dbReference type="Ensembl" id="ENSRNOT00000064477.3">
    <property type="protein sequence ID" value="ENSRNOP00000063246.2"/>
    <property type="gene ID" value="ENSRNOG00000017607.8"/>
</dbReference>
<dbReference type="GeneID" id="291000"/>
<dbReference type="KEGG" id="rno:291000"/>
<dbReference type="UCSC" id="RGD:1306577">
    <property type="organism name" value="rat"/>
</dbReference>
<dbReference type="AGR" id="RGD:1306577"/>
<dbReference type="CTD" id="23197"/>
<dbReference type="RGD" id="1306577">
    <property type="gene designation" value="Faf2"/>
</dbReference>
<dbReference type="eggNOG" id="KOG1363">
    <property type="taxonomic scope" value="Eukaryota"/>
</dbReference>
<dbReference type="GeneTree" id="ENSGT00940000157197"/>
<dbReference type="HOGENOM" id="CLU_047924_0_1_1"/>
<dbReference type="InParanoid" id="Q5BK32"/>
<dbReference type="PhylomeDB" id="Q5BK32"/>
<dbReference type="Reactome" id="R-RNO-6798695">
    <property type="pathway name" value="Neutrophil degranulation"/>
</dbReference>
<dbReference type="Reactome" id="R-RNO-8980692">
    <property type="pathway name" value="RHOA GTPase cycle"/>
</dbReference>
<dbReference type="PRO" id="PR:Q5BK32"/>
<dbReference type="Proteomes" id="UP000002494">
    <property type="component" value="Chromosome 17"/>
</dbReference>
<dbReference type="Bgee" id="ENSRNOG00000017607">
    <property type="expression patterns" value="Expressed in liver and 19 other cell types or tissues"/>
</dbReference>
<dbReference type="ExpressionAtlas" id="Q5BK32">
    <property type="expression patterns" value="baseline and differential"/>
</dbReference>
<dbReference type="GO" id="GO:0005783">
    <property type="term" value="C:endoplasmic reticulum"/>
    <property type="evidence" value="ECO:0000250"/>
    <property type="project" value="UniProtKB"/>
</dbReference>
<dbReference type="GO" id="GO:0005811">
    <property type="term" value="C:lipid droplet"/>
    <property type="evidence" value="ECO:0000266"/>
    <property type="project" value="RGD"/>
</dbReference>
<dbReference type="GO" id="GO:0034098">
    <property type="term" value="C:VCP-NPL4-UFD1 AAA ATPase complex"/>
    <property type="evidence" value="ECO:0000266"/>
    <property type="project" value="RGD"/>
</dbReference>
<dbReference type="GO" id="GO:0035473">
    <property type="term" value="F:lipase binding"/>
    <property type="evidence" value="ECO:0000266"/>
    <property type="project" value="RGD"/>
</dbReference>
<dbReference type="GO" id="GO:0055102">
    <property type="term" value="F:lipase inhibitor activity"/>
    <property type="evidence" value="ECO:0000266"/>
    <property type="project" value="RGD"/>
</dbReference>
<dbReference type="GO" id="GO:0030674">
    <property type="term" value="F:protein-macromolecule adaptor activity"/>
    <property type="evidence" value="ECO:0000250"/>
    <property type="project" value="UniProtKB"/>
</dbReference>
<dbReference type="GO" id="GO:0043130">
    <property type="term" value="F:ubiquitin binding"/>
    <property type="evidence" value="ECO:0000266"/>
    <property type="project" value="RGD"/>
</dbReference>
<dbReference type="GO" id="GO:0031625">
    <property type="term" value="F:ubiquitin protein ligase binding"/>
    <property type="evidence" value="ECO:0000266"/>
    <property type="project" value="RGD"/>
</dbReference>
<dbReference type="GO" id="GO:0036503">
    <property type="term" value="P:ERAD pathway"/>
    <property type="evidence" value="ECO:0000250"/>
    <property type="project" value="UniProtKB"/>
</dbReference>
<dbReference type="GO" id="GO:0034389">
    <property type="term" value="P:lipid droplet organization"/>
    <property type="evidence" value="ECO:0000266"/>
    <property type="project" value="RGD"/>
</dbReference>
<dbReference type="GO" id="GO:0043161">
    <property type="term" value="P:proteasome-mediated ubiquitin-dependent protein catabolic process"/>
    <property type="evidence" value="ECO:0000266"/>
    <property type="project" value="RGD"/>
</dbReference>
<dbReference type="GO" id="GO:0006986">
    <property type="term" value="P:response to unfolded protein"/>
    <property type="evidence" value="ECO:0007669"/>
    <property type="project" value="UniProtKB-KW"/>
</dbReference>
<dbReference type="GO" id="GO:0030970">
    <property type="term" value="P:retrograde protein transport, ER to cytosol"/>
    <property type="evidence" value="ECO:0000266"/>
    <property type="project" value="RGD"/>
</dbReference>
<dbReference type="GO" id="GO:0035617">
    <property type="term" value="P:stress granule disassembly"/>
    <property type="evidence" value="ECO:0000250"/>
    <property type="project" value="UniProtKB"/>
</dbReference>
<dbReference type="CDD" id="cd02991">
    <property type="entry name" value="UAS_ETEA"/>
    <property type="match status" value="1"/>
</dbReference>
<dbReference type="CDD" id="cd16120">
    <property type="entry name" value="UBX_UBXN3B"/>
    <property type="match status" value="1"/>
</dbReference>
<dbReference type="FunFam" id="3.10.20.90:FF:000101">
    <property type="entry name" value="FAS-associated factor 2 isoform X2"/>
    <property type="match status" value="1"/>
</dbReference>
<dbReference type="FunFam" id="3.40.30.10:FF:000066">
    <property type="entry name" value="FAS-associated factor 2 isoform X2"/>
    <property type="match status" value="1"/>
</dbReference>
<dbReference type="Gene3D" id="3.40.30.10">
    <property type="entry name" value="Glutaredoxin"/>
    <property type="match status" value="1"/>
</dbReference>
<dbReference type="Gene3D" id="3.10.20.90">
    <property type="entry name" value="Phosphatidylinositol 3-kinase Catalytic Subunit, Chain A, domain 1"/>
    <property type="match status" value="1"/>
</dbReference>
<dbReference type="InterPro" id="IPR049483">
    <property type="entry name" value="FAF1_2-like_UAS"/>
</dbReference>
<dbReference type="InterPro" id="IPR036249">
    <property type="entry name" value="Thioredoxin-like_sf"/>
</dbReference>
<dbReference type="InterPro" id="IPR006577">
    <property type="entry name" value="UAS"/>
</dbReference>
<dbReference type="InterPro" id="IPR029071">
    <property type="entry name" value="Ubiquitin-like_domsf"/>
</dbReference>
<dbReference type="InterPro" id="IPR001012">
    <property type="entry name" value="UBX_dom"/>
</dbReference>
<dbReference type="InterPro" id="IPR050730">
    <property type="entry name" value="UBX_domain-protein"/>
</dbReference>
<dbReference type="PANTHER" id="PTHR23322:SF1">
    <property type="entry name" value="FAS-ASSOCIATED FACTOR 2"/>
    <property type="match status" value="1"/>
</dbReference>
<dbReference type="PANTHER" id="PTHR23322">
    <property type="entry name" value="FAS-ASSOCIATED PROTEIN"/>
    <property type="match status" value="1"/>
</dbReference>
<dbReference type="Pfam" id="PF21021">
    <property type="entry name" value="FAF1"/>
    <property type="match status" value="1"/>
</dbReference>
<dbReference type="Pfam" id="PF00789">
    <property type="entry name" value="UBX"/>
    <property type="match status" value="1"/>
</dbReference>
<dbReference type="SMART" id="SM00594">
    <property type="entry name" value="UAS"/>
    <property type="match status" value="1"/>
</dbReference>
<dbReference type="SUPFAM" id="SSF52833">
    <property type="entry name" value="Thioredoxin-like"/>
    <property type="match status" value="1"/>
</dbReference>
<dbReference type="SUPFAM" id="SSF54236">
    <property type="entry name" value="Ubiquitin-like"/>
    <property type="match status" value="1"/>
</dbReference>
<dbReference type="PROSITE" id="PS50033">
    <property type="entry name" value="UBX"/>
    <property type="match status" value="1"/>
</dbReference>
<proteinExistence type="evidence at transcript level"/>
<organism>
    <name type="scientific">Rattus norvegicus</name>
    <name type="common">Rat</name>
    <dbReference type="NCBI Taxonomy" id="10116"/>
    <lineage>
        <taxon>Eukaryota</taxon>
        <taxon>Metazoa</taxon>
        <taxon>Chordata</taxon>
        <taxon>Craniata</taxon>
        <taxon>Vertebrata</taxon>
        <taxon>Euteleostomi</taxon>
        <taxon>Mammalia</taxon>
        <taxon>Eutheria</taxon>
        <taxon>Euarchontoglires</taxon>
        <taxon>Glires</taxon>
        <taxon>Rodentia</taxon>
        <taxon>Myomorpha</taxon>
        <taxon>Muroidea</taxon>
        <taxon>Muridae</taxon>
        <taxon>Murinae</taxon>
        <taxon>Rattus</taxon>
    </lineage>
</organism>
<sequence length="346" mass="41080">MLPFRFTYYTILDIFRFALRFIRPDPRSRVTDPVGDIVSFMHSFEEKYGRAHPVFYQGTYSQALSDAKRELRFLLVYLHGDDHQDSDEFCRNALCAPEVISLINSRMLFWACSTNKPEGYRVSQALRENTYPFLAMIMLKDRRMTVVGRLEGLIQPDDLINQLTFIMDANQTYLVSERLEREERNQTQVLRQQQDEAYLASLRADQEKERKKREERERKRRKEEEVQQQKLAEERRRQNLQEEKERKLECLPPEPSPDDPDSVKIIFKLPNDSRVERRFHFSQSLTVIHDFLFSLKESPEKFQIEANFPRRVLPCVPSEEWPNPPTLQEAGLSHTEVLFVQDLTDE</sequence>
<reference key="1">
    <citation type="journal article" date="2004" name="Genome Res.">
        <title>The status, quality, and expansion of the NIH full-length cDNA project: the Mammalian Gene Collection (MGC).</title>
        <authorList>
            <consortium name="The MGC Project Team"/>
        </authorList>
    </citation>
    <scope>NUCLEOTIDE SEQUENCE [LARGE SCALE MRNA]</scope>
    <source>
        <tissue>Kidney</tissue>
    </source>
</reference>
<accession>Q5BK32</accession>
<keyword id="KW-0007">Acetylation</keyword>
<keyword id="KW-0175">Coiled coil</keyword>
<keyword id="KW-0963">Cytoplasm</keyword>
<keyword id="KW-0256">Endoplasmic reticulum</keyword>
<keyword id="KW-0551">Lipid droplet</keyword>
<keyword id="KW-1185">Reference proteome</keyword>
<keyword id="KW-0834">Unfolded protein response</keyword>
<name>FAF2_RAT</name>
<evidence type="ECO:0000250" key="1">
    <source>
        <dbReference type="UniProtKB" id="Q3TDN2"/>
    </source>
</evidence>
<evidence type="ECO:0000250" key="2">
    <source>
        <dbReference type="UniProtKB" id="Q96CS3"/>
    </source>
</evidence>
<evidence type="ECO:0000255" key="3"/>
<evidence type="ECO:0000255" key="4">
    <source>
        <dbReference type="PROSITE-ProRule" id="PRU00215"/>
    </source>
</evidence>
<evidence type="ECO:0000256" key="5">
    <source>
        <dbReference type="SAM" id="MobiDB-lite"/>
    </source>
</evidence>
<comment type="function">
    <text evidence="2">Plays an important role in endoplasmic reticulum-associated degradation (ERAD) that mediates ubiquitin-dependent degradation of misfolded endoplasmic reticulum proteins. By controlling the steady-state expression of the IGF1R receptor, indirectly regulates the insulin-like growth factor receptor signaling pathway. Involved in inhibition of lipid droplet degradation by binding to phospholipase PNPL2 and inhibiting its activity by promoting dissociation of PNPL2 from its endogenous activator, ABHD5 which inhibits the rate of triacylglycerol hydrolysis. Involved in stress granule disassembly: associates with ubiquitinated G3BP1 in response to heat shock, thereby promoting interaction between ubiquitinated G3BP1 and VCP, followed by G3BP1 extraction from stress granules and stress granule disassembly.</text>
</comment>
<comment type="subunit">
    <text evidence="1 2">Identified in a complex that contains SEL1L, OS9, FAF2/UBXD8, UBE2J1/UBC6E and AUP1 (By similarity). Interacts with YOD1 (By similarity). Interacts (via N-terminus) with UBQLN2 (via C-terminus) (By similarity). Interacts with PNPLA2 and UBAC2 (By similarity). Interacts with ZFAND2B; probably through VCP (By similarity). Interacts with LMBR1L (By similarity).</text>
</comment>
<comment type="subcellular location">
    <subcellularLocation>
        <location evidence="2">Cytoplasm</location>
    </subcellularLocation>
    <subcellularLocation>
        <location evidence="2">Lipid droplet</location>
    </subcellularLocation>
    <subcellularLocation>
        <location evidence="2">Endoplasmic reticulum</location>
    </subcellularLocation>
</comment>
<protein>
    <recommendedName>
        <fullName>FAS-associated factor 2</fullName>
    </recommendedName>
    <alternativeName>
        <fullName>UBX domain-containing protein 8</fullName>
    </alternativeName>
</protein>